<dbReference type="EMBL" id="AP007232">
    <property type="protein sequence ID" value="BAE47612.1"/>
    <property type="molecule type" value="Genomic_DNA"/>
</dbReference>
<dbReference type="EMBL" id="DQ383816">
    <property type="protein sequence ID" value="ABD47251.1"/>
    <property type="molecule type" value="Genomic_DNA"/>
</dbReference>
<dbReference type="RefSeq" id="YP_398347.1">
    <property type="nucleotide sequence ID" value="NC_007578.1"/>
</dbReference>
<dbReference type="SMR" id="Q332W0"/>
<dbReference type="GeneID" id="3772838"/>
<dbReference type="KEGG" id="lsv:3772838"/>
<dbReference type="OrthoDB" id="738066at2759"/>
<dbReference type="GO" id="GO:0009535">
    <property type="term" value="C:chloroplast thylakoid membrane"/>
    <property type="evidence" value="ECO:0007669"/>
    <property type="project" value="UniProtKB-SubCell"/>
</dbReference>
<dbReference type="GO" id="GO:0009512">
    <property type="term" value="C:cytochrome b6f complex"/>
    <property type="evidence" value="ECO:0007669"/>
    <property type="project" value="InterPro"/>
</dbReference>
<dbReference type="GO" id="GO:0045158">
    <property type="term" value="F:electron transporter, transferring electrons within cytochrome b6/f complex of photosystem II activity"/>
    <property type="evidence" value="ECO:0007669"/>
    <property type="project" value="UniProtKB-UniRule"/>
</dbReference>
<dbReference type="GO" id="GO:0015979">
    <property type="term" value="P:photosynthesis"/>
    <property type="evidence" value="ECO:0007669"/>
    <property type="project" value="UniProtKB-KW"/>
</dbReference>
<dbReference type="HAMAP" id="MF_00433">
    <property type="entry name" value="Cytb6_f_PetL"/>
    <property type="match status" value="1"/>
</dbReference>
<dbReference type="InterPro" id="IPR007802">
    <property type="entry name" value="Cyt_b6/f_cplx_su6"/>
</dbReference>
<dbReference type="PANTHER" id="PTHR37266">
    <property type="entry name" value="CYTOCHROME B6-F COMPLEX SUBUNIT 6"/>
    <property type="match status" value="1"/>
</dbReference>
<dbReference type="PANTHER" id="PTHR37266:SF1">
    <property type="entry name" value="CYTOCHROME B6-F COMPLEX SUBUNIT 6"/>
    <property type="match status" value="1"/>
</dbReference>
<dbReference type="Pfam" id="PF05115">
    <property type="entry name" value="PetL"/>
    <property type="match status" value="1"/>
</dbReference>
<dbReference type="SUPFAM" id="SSF103436">
    <property type="entry name" value="PetL subunit of the cytochrome b6f complex"/>
    <property type="match status" value="1"/>
</dbReference>
<sequence length="31" mass="3419">MLTITSYFGFLLTALTITSALFIGLSKIRLI</sequence>
<reference key="1">
    <citation type="journal article" date="2006" name="Transgenic Res.">
        <title>Efficient and stable transformation of Lactuca sativa L. cv. Cisco (lettuce) plastids.</title>
        <authorList>
            <person name="Kanamoto H."/>
            <person name="Yamashita A."/>
            <person name="Asao H."/>
            <person name="Okumura S."/>
            <person name="Takase H."/>
            <person name="Hattori M."/>
            <person name="Yokota A."/>
            <person name="Tomizawa K."/>
        </authorList>
    </citation>
    <scope>NUCLEOTIDE SEQUENCE [LARGE SCALE GENOMIC DNA]</scope>
    <source>
        <strain>cv. Cisco</strain>
    </source>
</reference>
<reference key="2">
    <citation type="submission" date="2006-01" db="EMBL/GenBank/DDBJ databases">
        <title>A comparison of the first two published chloroplast genomes in Asteraceae: Lactuca and Helianthus.</title>
        <authorList>
            <person name="Timme R.E."/>
            <person name="Kuehl J.V."/>
            <person name="Boore J.L."/>
            <person name="Jansen R.K."/>
        </authorList>
    </citation>
    <scope>NUCLEOTIDE SEQUENCE [LARGE SCALE GENOMIC DNA]</scope>
    <source>
        <strain>cv. Salinas</strain>
    </source>
</reference>
<evidence type="ECO:0000255" key="1">
    <source>
        <dbReference type="HAMAP-Rule" id="MF_00433"/>
    </source>
</evidence>
<protein>
    <recommendedName>
        <fullName evidence="1">Cytochrome b6-f complex subunit 6</fullName>
    </recommendedName>
    <alternativeName>
        <fullName evidence="1">Cytochrome b6-f complex subunit PetL</fullName>
    </alternativeName>
    <alternativeName>
        <fullName evidence="1">Cytochrome b6-f complex subunit VI</fullName>
    </alternativeName>
</protein>
<accession>Q332W0</accession>
<accession>Q1KXK5</accession>
<name>PETL_LACSA</name>
<proteinExistence type="inferred from homology"/>
<feature type="chain" id="PRO_0000233676" description="Cytochrome b6-f complex subunit 6">
    <location>
        <begin position="1"/>
        <end position="31"/>
    </location>
</feature>
<feature type="transmembrane region" description="Helical" evidence="1">
    <location>
        <begin position="4"/>
        <end position="26"/>
    </location>
</feature>
<keyword id="KW-0150">Chloroplast</keyword>
<keyword id="KW-0249">Electron transport</keyword>
<keyword id="KW-0472">Membrane</keyword>
<keyword id="KW-0602">Photosynthesis</keyword>
<keyword id="KW-0934">Plastid</keyword>
<keyword id="KW-0793">Thylakoid</keyword>
<keyword id="KW-0812">Transmembrane</keyword>
<keyword id="KW-1133">Transmembrane helix</keyword>
<keyword id="KW-0813">Transport</keyword>
<organism>
    <name type="scientific">Lactuca sativa</name>
    <name type="common">Garden lettuce</name>
    <dbReference type="NCBI Taxonomy" id="4236"/>
    <lineage>
        <taxon>Eukaryota</taxon>
        <taxon>Viridiplantae</taxon>
        <taxon>Streptophyta</taxon>
        <taxon>Embryophyta</taxon>
        <taxon>Tracheophyta</taxon>
        <taxon>Spermatophyta</taxon>
        <taxon>Magnoliopsida</taxon>
        <taxon>eudicotyledons</taxon>
        <taxon>Gunneridae</taxon>
        <taxon>Pentapetalae</taxon>
        <taxon>asterids</taxon>
        <taxon>campanulids</taxon>
        <taxon>Asterales</taxon>
        <taxon>Asteraceae</taxon>
        <taxon>Cichorioideae</taxon>
        <taxon>Cichorieae</taxon>
        <taxon>Lactucinae</taxon>
        <taxon>Lactuca</taxon>
    </lineage>
</organism>
<gene>
    <name evidence="1" type="primary">petL</name>
</gene>
<comment type="function">
    <text evidence="1">Component of the cytochrome b6-f complex, which mediates electron transfer between photosystem II (PSII) and photosystem I (PSI), cyclic electron flow around PSI, and state transitions. PetL is important for photoautotrophic growth as well as for electron transfer efficiency and stability of the cytochrome b6-f complex.</text>
</comment>
<comment type="subunit">
    <text evidence="1">The 4 large subunits of the cytochrome b6-f complex are cytochrome b6, subunit IV (17 kDa polypeptide, PetD), cytochrome f and the Rieske protein, while the 4 small subunits are PetG, PetL, PetM and PetN. The complex functions as a dimer.</text>
</comment>
<comment type="subcellular location">
    <subcellularLocation>
        <location evidence="1">Plastid</location>
        <location evidence="1">Chloroplast thylakoid membrane</location>
        <topology evidence="1">Single-pass membrane protein</topology>
    </subcellularLocation>
</comment>
<comment type="similarity">
    <text evidence="1">Belongs to the PetL family.</text>
</comment>
<geneLocation type="chloroplast"/>